<comment type="similarity">
    <text evidence="1">Belongs to the mycobacterial PPE family.</text>
</comment>
<evidence type="ECO:0000305" key="1"/>
<proteinExistence type="inferred from homology"/>
<reference key="1">
    <citation type="journal article" date="1998" name="Nature">
        <title>Deciphering the biology of Mycobacterium tuberculosis from the complete genome sequence.</title>
        <authorList>
            <person name="Cole S.T."/>
            <person name="Brosch R."/>
            <person name="Parkhill J."/>
            <person name="Garnier T."/>
            <person name="Churcher C.M."/>
            <person name="Harris D.E."/>
            <person name="Gordon S.V."/>
            <person name="Eiglmeier K."/>
            <person name="Gas S."/>
            <person name="Barry C.E. III"/>
            <person name="Tekaia F."/>
            <person name="Badcock K."/>
            <person name="Basham D."/>
            <person name="Brown D."/>
            <person name="Chillingworth T."/>
            <person name="Connor R."/>
            <person name="Davies R.M."/>
            <person name="Devlin K."/>
            <person name="Feltwell T."/>
            <person name="Gentles S."/>
            <person name="Hamlin N."/>
            <person name="Holroyd S."/>
            <person name="Hornsby T."/>
            <person name="Jagels K."/>
            <person name="Krogh A."/>
            <person name="McLean J."/>
            <person name="Moule S."/>
            <person name="Murphy L.D."/>
            <person name="Oliver S."/>
            <person name="Osborne J."/>
            <person name="Quail M.A."/>
            <person name="Rajandream M.A."/>
            <person name="Rogers J."/>
            <person name="Rutter S."/>
            <person name="Seeger K."/>
            <person name="Skelton S."/>
            <person name="Squares S."/>
            <person name="Squares R."/>
            <person name="Sulston J.E."/>
            <person name="Taylor K."/>
            <person name="Whitehead S."/>
            <person name="Barrell B.G."/>
        </authorList>
    </citation>
    <scope>NUCLEOTIDE SEQUENCE [LARGE SCALE GENOMIC DNA]</scope>
    <source>
        <strain>ATCC 25618 / H37Rv</strain>
    </source>
</reference>
<gene>
    <name type="primary">PPE59</name>
    <name type="ordered locus">Rv3429</name>
    <name type="ORF">MTCY77.01</name>
</gene>
<sequence>MHPMIPAEYISNIIYEGPGADSLSAAAEQLRLMYNSANMTAKSLTDRLGELQENWKGSSSDLMADAAGRYLDWLTKHSRQILETAYVIDFLAYVYEETRHKVVPPATIANNREEVHRLIASNVAGVNTPAIAGLDAQYQQYRAQNIAVMNDYQSTARFILAYLPRWQEPPQIYGGGGG</sequence>
<protein>
    <recommendedName>
        <fullName>Uncharacterized PPE family protein PPE59</fullName>
    </recommendedName>
</protein>
<organism>
    <name type="scientific">Mycobacterium tuberculosis (strain ATCC 25618 / H37Rv)</name>
    <dbReference type="NCBI Taxonomy" id="83332"/>
    <lineage>
        <taxon>Bacteria</taxon>
        <taxon>Bacillati</taxon>
        <taxon>Actinomycetota</taxon>
        <taxon>Actinomycetes</taxon>
        <taxon>Mycobacteriales</taxon>
        <taxon>Mycobacteriaceae</taxon>
        <taxon>Mycobacterium</taxon>
        <taxon>Mycobacterium tuberculosis complex</taxon>
    </lineage>
</organism>
<accession>P9WHY1</accession>
<accession>L0TFC8</accession>
<accession>O06246</accession>
<feature type="chain" id="PRO_0000217855" description="Uncharacterized PPE family protein PPE59">
    <location>
        <begin position="1"/>
        <end position="178"/>
    </location>
</feature>
<name>PPE59_MYCTU</name>
<keyword id="KW-1185">Reference proteome</keyword>
<dbReference type="EMBL" id="AL123456">
    <property type="protein sequence ID" value="CCP46251.1"/>
    <property type="molecule type" value="Genomic_DNA"/>
</dbReference>
<dbReference type="PIR" id="C70975">
    <property type="entry name" value="C70975"/>
</dbReference>
<dbReference type="RefSeq" id="WP_003900053.1">
    <property type="nucleotide sequence ID" value="NZ_NVQJ01000027.1"/>
</dbReference>
<dbReference type="RefSeq" id="YP_177973.1">
    <property type="nucleotide sequence ID" value="NC_000962.3"/>
</dbReference>
<dbReference type="SMR" id="P9WHY1"/>
<dbReference type="STRING" id="83332.Rv3429"/>
<dbReference type="PaxDb" id="83332-Rv3429"/>
<dbReference type="DNASU" id="887630"/>
<dbReference type="GeneID" id="887630"/>
<dbReference type="KEGG" id="mtu:Rv3429"/>
<dbReference type="KEGG" id="mtv:RVBD_3429"/>
<dbReference type="TubercuList" id="Rv3429"/>
<dbReference type="eggNOG" id="COG5651">
    <property type="taxonomic scope" value="Bacteria"/>
</dbReference>
<dbReference type="InParanoid" id="P9WHY1"/>
<dbReference type="OrthoDB" id="4753774at2"/>
<dbReference type="PhylomeDB" id="P9WHY1"/>
<dbReference type="Proteomes" id="UP000001584">
    <property type="component" value="Chromosome"/>
</dbReference>
<dbReference type="Gene3D" id="1.20.1260.20">
    <property type="entry name" value="PPE superfamily"/>
    <property type="match status" value="1"/>
</dbReference>
<dbReference type="InterPro" id="IPR000030">
    <property type="entry name" value="PPE_dom"/>
</dbReference>
<dbReference type="InterPro" id="IPR038332">
    <property type="entry name" value="PPE_sf"/>
</dbReference>
<dbReference type="PANTHER" id="PTHR46766">
    <property type="entry name" value="GLUTAMINE-RICH PROTEIN 2"/>
    <property type="match status" value="1"/>
</dbReference>
<dbReference type="PANTHER" id="PTHR46766:SF1">
    <property type="entry name" value="GLUTAMINE-RICH PROTEIN 2"/>
    <property type="match status" value="1"/>
</dbReference>
<dbReference type="Pfam" id="PF00823">
    <property type="entry name" value="PPE"/>
    <property type="match status" value="1"/>
</dbReference>
<dbReference type="SUPFAM" id="SSF140459">
    <property type="entry name" value="PE/PPE dimer-like"/>
    <property type="match status" value="1"/>
</dbReference>